<protein>
    <recommendedName>
        <fullName evidence="1">Ribosome maturation factor RimM</fullName>
    </recommendedName>
</protein>
<keyword id="KW-0143">Chaperone</keyword>
<keyword id="KW-0963">Cytoplasm</keyword>
<keyword id="KW-0690">Ribosome biogenesis</keyword>
<keyword id="KW-0698">rRNA processing</keyword>
<feature type="chain" id="PRO_1000001214" description="Ribosome maturation factor RimM">
    <location>
        <begin position="1"/>
        <end position="179"/>
    </location>
</feature>
<feature type="domain" description="PRC barrel" evidence="1">
    <location>
        <begin position="100"/>
        <end position="176"/>
    </location>
</feature>
<gene>
    <name evidence="1" type="primary">rimM</name>
    <name type="ordered locus">A9601_18151</name>
</gene>
<comment type="function">
    <text evidence="1">An accessory protein needed during the final step in the assembly of 30S ribosomal subunit, possibly for assembly of the head region. Essential for efficient processing of 16S rRNA. May be needed both before and after RbfA during the maturation of 16S rRNA. It has affinity for free ribosomal 30S subunits but not for 70S ribosomes.</text>
</comment>
<comment type="subunit">
    <text evidence="1">Binds ribosomal protein uS19.</text>
</comment>
<comment type="subcellular location">
    <subcellularLocation>
        <location evidence="1">Cytoplasm</location>
    </subcellularLocation>
</comment>
<comment type="domain">
    <text evidence="1">The PRC barrel domain binds ribosomal protein uS19.</text>
</comment>
<comment type="similarity">
    <text evidence="1">Belongs to the RimM family.</text>
</comment>
<reference key="1">
    <citation type="journal article" date="2007" name="PLoS Genet.">
        <title>Patterns and implications of gene gain and loss in the evolution of Prochlorococcus.</title>
        <authorList>
            <person name="Kettler G.C."/>
            <person name="Martiny A.C."/>
            <person name="Huang K."/>
            <person name="Zucker J."/>
            <person name="Coleman M.L."/>
            <person name="Rodrigue S."/>
            <person name="Chen F."/>
            <person name="Lapidus A."/>
            <person name="Ferriera S."/>
            <person name="Johnson J."/>
            <person name="Steglich C."/>
            <person name="Church G.M."/>
            <person name="Richardson P."/>
            <person name="Chisholm S.W."/>
        </authorList>
    </citation>
    <scope>NUCLEOTIDE SEQUENCE [LARGE SCALE GENOMIC DNA]</scope>
    <source>
        <strain>AS9601</strain>
    </source>
</reference>
<accession>A2BTI7</accession>
<organism>
    <name type="scientific">Prochlorococcus marinus (strain AS9601)</name>
    <dbReference type="NCBI Taxonomy" id="146891"/>
    <lineage>
        <taxon>Bacteria</taxon>
        <taxon>Bacillati</taxon>
        <taxon>Cyanobacteriota</taxon>
        <taxon>Cyanophyceae</taxon>
        <taxon>Synechococcales</taxon>
        <taxon>Prochlorococcaceae</taxon>
        <taxon>Prochlorococcus</taxon>
    </lineage>
</organism>
<dbReference type="EMBL" id="CP000551">
    <property type="protein sequence ID" value="ABM71098.1"/>
    <property type="molecule type" value="Genomic_DNA"/>
</dbReference>
<dbReference type="RefSeq" id="WP_011819219.1">
    <property type="nucleotide sequence ID" value="NC_008816.1"/>
</dbReference>
<dbReference type="SMR" id="A2BTI7"/>
<dbReference type="STRING" id="146891.A9601_18151"/>
<dbReference type="KEGG" id="pmb:A9601_18151"/>
<dbReference type="eggNOG" id="COG0806">
    <property type="taxonomic scope" value="Bacteria"/>
</dbReference>
<dbReference type="HOGENOM" id="CLU_077636_3_0_3"/>
<dbReference type="OrthoDB" id="9810331at2"/>
<dbReference type="Proteomes" id="UP000002590">
    <property type="component" value="Chromosome"/>
</dbReference>
<dbReference type="GO" id="GO:0005737">
    <property type="term" value="C:cytoplasm"/>
    <property type="evidence" value="ECO:0007669"/>
    <property type="project" value="UniProtKB-SubCell"/>
</dbReference>
<dbReference type="GO" id="GO:0005840">
    <property type="term" value="C:ribosome"/>
    <property type="evidence" value="ECO:0007669"/>
    <property type="project" value="InterPro"/>
</dbReference>
<dbReference type="GO" id="GO:0043022">
    <property type="term" value="F:ribosome binding"/>
    <property type="evidence" value="ECO:0007669"/>
    <property type="project" value="InterPro"/>
</dbReference>
<dbReference type="GO" id="GO:0042274">
    <property type="term" value="P:ribosomal small subunit biogenesis"/>
    <property type="evidence" value="ECO:0007669"/>
    <property type="project" value="UniProtKB-UniRule"/>
</dbReference>
<dbReference type="GO" id="GO:0006364">
    <property type="term" value="P:rRNA processing"/>
    <property type="evidence" value="ECO:0007669"/>
    <property type="project" value="UniProtKB-UniRule"/>
</dbReference>
<dbReference type="Gene3D" id="2.30.30.240">
    <property type="entry name" value="PRC-barrel domain"/>
    <property type="match status" value="1"/>
</dbReference>
<dbReference type="Gene3D" id="2.40.30.60">
    <property type="entry name" value="RimM"/>
    <property type="match status" value="1"/>
</dbReference>
<dbReference type="HAMAP" id="MF_00014">
    <property type="entry name" value="Ribosome_mat_RimM"/>
    <property type="match status" value="1"/>
</dbReference>
<dbReference type="InterPro" id="IPR011033">
    <property type="entry name" value="PRC_barrel-like_sf"/>
</dbReference>
<dbReference type="InterPro" id="IPR056792">
    <property type="entry name" value="PRC_RimM"/>
</dbReference>
<dbReference type="InterPro" id="IPR011961">
    <property type="entry name" value="RimM"/>
</dbReference>
<dbReference type="InterPro" id="IPR002676">
    <property type="entry name" value="RimM_N"/>
</dbReference>
<dbReference type="InterPro" id="IPR036976">
    <property type="entry name" value="RimM_N_sf"/>
</dbReference>
<dbReference type="InterPro" id="IPR009000">
    <property type="entry name" value="Transl_B-barrel_sf"/>
</dbReference>
<dbReference type="NCBIfam" id="TIGR02273">
    <property type="entry name" value="16S_RimM"/>
    <property type="match status" value="1"/>
</dbReference>
<dbReference type="PANTHER" id="PTHR33692">
    <property type="entry name" value="RIBOSOME MATURATION FACTOR RIMM"/>
    <property type="match status" value="1"/>
</dbReference>
<dbReference type="PANTHER" id="PTHR33692:SF1">
    <property type="entry name" value="RIBOSOME MATURATION FACTOR RIMM"/>
    <property type="match status" value="1"/>
</dbReference>
<dbReference type="Pfam" id="PF24986">
    <property type="entry name" value="PRC_RimM"/>
    <property type="match status" value="1"/>
</dbReference>
<dbReference type="Pfam" id="PF01782">
    <property type="entry name" value="RimM"/>
    <property type="match status" value="1"/>
</dbReference>
<dbReference type="SUPFAM" id="SSF50346">
    <property type="entry name" value="PRC-barrel domain"/>
    <property type="match status" value="1"/>
</dbReference>
<dbReference type="SUPFAM" id="SSF50447">
    <property type="entry name" value="Translation proteins"/>
    <property type="match status" value="1"/>
</dbReference>
<sequence length="179" mass="20773">MIIKNEWLIVGFITSCHGINGQLKVKSLSDFEERFLKPGMRWLQKESEHPSKIELISGFKQPGKEIFIVKFKGINTRNHAEQLKKCKLLVKSDKLPKLKKEEFHLLELIDLEVKTLENDELKIIGKVINLENEKNNLLIIELFKNQKKVLIPFVKEIVPLVDIKNNFLIINPPNGLLEL</sequence>
<evidence type="ECO:0000255" key="1">
    <source>
        <dbReference type="HAMAP-Rule" id="MF_00014"/>
    </source>
</evidence>
<name>RIMM_PROMS</name>
<proteinExistence type="inferred from homology"/>